<comment type="function">
    <text evidence="1">Hydrolyzes acetyl esters in homogalacturonan regions of pectin. In type I primary cell wall, galacturonic acid residues of pectin can be acetylated at the O-2 and O-3 positions. Decreasing the degree of acetylation of pectin gels in vitro alters their physical properties.</text>
</comment>
<comment type="subcellular location">
    <subcellularLocation>
        <location evidence="6">Secreted</location>
        <location evidence="6">Cell wall</location>
    </subcellularLocation>
</comment>
<comment type="alternative products">
    <event type="alternative splicing"/>
    <isoform>
        <id>Q9FH82-1</id>
        <name>1</name>
        <sequence type="displayed"/>
    </isoform>
    <isoform>
        <id>Q9FH82-2</id>
        <name>2</name>
        <sequence type="described" ref="VSP_057380 VSP_057381"/>
    </isoform>
</comment>
<comment type="disruption phenotype">
    <text evidence="4">No visible phenotype under normal growth conditions.</text>
</comment>
<comment type="similarity">
    <text evidence="6">Belongs to the pectinacetylesterase family.</text>
</comment>
<gene>
    <name evidence="5" type="primary">PAE11</name>
    <name evidence="7" type="ordered locus">At5g45280</name>
    <name evidence="8" type="ORF">K9E15.6</name>
</gene>
<dbReference type="EC" id="3.1.1.-" evidence="6"/>
<dbReference type="EMBL" id="AB020744">
    <property type="protein sequence ID" value="BAB10249.1"/>
    <property type="molecule type" value="Genomic_DNA"/>
</dbReference>
<dbReference type="EMBL" id="CP002688">
    <property type="protein sequence ID" value="AED95225.1"/>
    <property type="molecule type" value="Genomic_DNA"/>
</dbReference>
<dbReference type="EMBL" id="CP002688">
    <property type="protein sequence ID" value="AED95226.1"/>
    <property type="molecule type" value="Genomic_DNA"/>
</dbReference>
<dbReference type="EMBL" id="AY057665">
    <property type="protein sequence ID" value="AAL15296.1"/>
    <property type="molecule type" value="mRNA"/>
</dbReference>
<dbReference type="EMBL" id="AY056198">
    <property type="protein sequence ID" value="AAL07047.1"/>
    <property type="molecule type" value="mRNA"/>
</dbReference>
<dbReference type="EMBL" id="AY150453">
    <property type="protein sequence ID" value="AAN12894.1"/>
    <property type="molecule type" value="mRNA"/>
</dbReference>
<dbReference type="EMBL" id="AY087860">
    <property type="protein sequence ID" value="AAM65412.1"/>
    <property type="molecule type" value="mRNA"/>
</dbReference>
<dbReference type="RefSeq" id="NP_199341.1">
    <molecule id="Q9FH82-1"/>
    <property type="nucleotide sequence ID" value="NM_123896.4"/>
</dbReference>
<dbReference type="RefSeq" id="NP_851135.1">
    <molecule id="Q9FH82-2"/>
    <property type="nucleotide sequence ID" value="NM_180804.1"/>
</dbReference>
<dbReference type="SMR" id="Q9FH82"/>
<dbReference type="FunCoup" id="Q9FH82">
    <property type="interactions" value="27"/>
</dbReference>
<dbReference type="STRING" id="3702.Q9FH82"/>
<dbReference type="ESTHER" id="arath-q8lae9">
    <property type="family name" value="Pectinacetylesterase-Notum"/>
</dbReference>
<dbReference type="GlyGen" id="Q9FH82">
    <property type="glycosylation" value="1 site"/>
</dbReference>
<dbReference type="SwissPalm" id="Q9FH82"/>
<dbReference type="PaxDb" id="3702-AT5G45280.2"/>
<dbReference type="ProteomicsDB" id="236315">
    <molecule id="Q9FH82-1"/>
</dbReference>
<dbReference type="EnsemblPlants" id="AT5G45280.1">
    <molecule id="Q9FH82-2"/>
    <property type="protein sequence ID" value="AT5G45280.1"/>
    <property type="gene ID" value="AT5G45280"/>
</dbReference>
<dbReference type="EnsemblPlants" id="AT5G45280.2">
    <molecule id="Q9FH82-1"/>
    <property type="protein sequence ID" value="AT5G45280.2"/>
    <property type="gene ID" value="AT5G45280"/>
</dbReference>
<dbReference type="GeneID" id="834564"/>
<dbReference type="Gramene" id="AT5G45280.1">
    <molecule id="Q9FH82-2"/>
    <property type="protein sequence ID" value="AT5G45280.1"/>
    <property type="gene ID" value="AT5G45280"/>
</dbReference>
<dbReference type="Gramene" id="AT5G45280.2">
    <molecule id="Q9FH82-1"/>
    <property type="protein sequence ID" value="AT5G45280.2"/>
    <property type="gene ID" value="AT5G45280"/>
</dbReference>
<dbReference type="KEGG" id="ath:AT5G45280"/>
<dbReference type="Araport" id="AT5G45280"/>
<dbReference type="TAIR" id="AT5G45280">
    <property type="gene designation" value="PAE11"/>
</dbReference>
<dbReference type="eggNOG" id="KOG4287">
    <property type="taxonomic scope" value="Eukaryota"/>
</dbReference>
<dbReference type="HOGENOM" id="CLU_031008_0_3_1"/>
<dbReference type="InParanoid" id="Q9FH82"/>
<dbReference type="OMA" id="TWAKCKL"/>
<dbReference type="PhylomeDB" id="Q9FH82"/>
<dbReference type="CD-CODE" id="4299E36E">
    <property type="entry name" value="Nucleolus"/>
</dbReference>
<dbReference type="PRO" id="PR:Q9FH82"/>
<dbReference type="Proteomes" id="UP000006548">
    <property type="component" value="Chromosome 5"/>
</dbReference>
<dbReference type="ExpressionAtlas" id="Q9FH82">
    <property type="expression patterns" value="baseline and differential"/>
</dbReference>
<dbReference type="GO" id="GO:0005576">
    <property type="term" value="C:extracellular region"/>
    <property type="evidence" value="ECO:0007669"/>
    <property type="project" value="UniProtKB-KW"/>
</dbReference>
<dbReference type="GO" id="GO:0005886">
    <property type="term" value="C:plasma membrane"/>
    <property type="evidence" value="ECO:0007005"/>
    <property type="project" value="TAIR"/>
</dbReference>
<dbReference type="GO" id="GO:0009506">
    <property type="term" value="C:plasmodesma"/>
    <property type="evidence" value="ECO:0007005"/>
    <property type="project" value="TAIR"/>
</dbReference>
<dbReference type="GO" id="GO:0016787">
    <property type="term" value="F:hydrolase activity"/>
    <property type="evidence" value="ECO:0007669"/>
    <property type="project" value="UniProtKB-KW"/>
</dbReference>
<dbReference type="GO" id="GO:0071555">
    <property type="term" value="P:cell wall organization"/>
    <property type="evidence" value="ECO:0007669"/>
    <property type="project" value="UniProtKB-KW"/>
</dbReference>
<dbReference type="InterPro" id="IPR004963">
    <property type="entry name" value="PAE/NOTUM"/>
</dbReference>
<dbReference type="PANTHER" id="PTHR21562">
    <property type="entry name" value="NOTUM-RELATED"/>
    <property type="match status" value="1"/>
</dbReference>
<dbReference type="PANTHER" id="PTHR21562:SF51">
    <property type="entry name" value="PECTIN ACETYLESTERASE 11"/>
    <property type="match status" value="1"/>
</dbReference>
<dbReference type="Pfam" id="PF03283">
    <property type="entry name" value="PAE"/>
    <property type="match status" value="1"/>
</dbReference>
<name>PAE11_ARATH</name>
<reference key="1">
    <citation type="journal article" date="2000" name="DNA Res.">
        <title>Structural analysis of Arabidopsis thaliana chromosome 5. X. Sequence features of the regions of 3,076,755 bp covered by sixty P1 and TAC clones.</title>
        <authorList>
            <person name="Sato S."/>
            <person name="Nakamura Y."/>
            <person name="Kaneko T."/>
            <person name="Katoh T."/>
            <person name="Asamizu E."/>
            <person name="Kotani H."/>
            <person name="Tabata S."/>
        </authorList>
    </citation>
    <scope>NUCLEOTIDE SEQUENCE [LARGE SCALE GENOMIC DNA]</scope>
    <source>
        <strain>cv. Columbia</strain>
    </source>
</reference>
<reference key="2">
    <citation type="journal article" date="2017" name="Plant J.">
        <title>Araport11: a complete reannotation of the Arabidopsis thaliana reference genome.</title>
        <authorList>
            <person name="Cheng C.Y."/>
            <person name="Krishnakumar V."/>
            <person name="Chan A.P."/>
            <person name="Thibaud-Nissen F."/>
            <person name="Schobel S."/>
            <person name="Town C.D."/>
        </authorList>
    </citation>
    <scope>GENOME REANNOTATION</scope>
    <source>
        <strain>cv. Columbia</strain>
    </source>
</reference>
<reference key="3">
    <citation type="journal article" date="2003" name="Science">
        <title>Empirical analysis of transcriptional activity in the Arabidopsis genome.</title>
        <authorList>
            <person name="Yamada K."/>
            <person name="Lim J."/>
            <person name="Dale J.M."/>
            <person name="Chen H."/>
            <person name="Shinn P."/>
            <person name="Palm C.J."/>
            <person name="Southwick A.M."/>
            <person name="Wu H.C."/>
            <person name="Kim C.J."/>
            <person name="Nguyen M."/>
            <person name="Pham P.K."/>
            <person name="Cheuk R.F."/>
            <person name="Karlin-Newmann G."/>
            <person name="Liu S.X."/>
            <person name="Lam B."/>
            <person name="Sakano H."/>
            <person name="Wu T."/>
            <person name="Yu G."/>
            <person name="Miranda M."/>
            <person name="Quach H.L."/>
            <person name="Tripp M."/>
            <person name="Chang C.H."/>
            <person name="Lee J.M."/>
            <person name="Toriumi M.J."/>
            <person name="Chan M.M."/>
            <person name="Tang C.C."/>
            <person name="Onodera C.S."/>
            <person name="Deng J.M."/>
            <person name="Akiyama K."/>
            <person name="Ansari Y."/>
            <person name="Arakawa T."/>
            <person name="Banh J."/>
            <person name="Banno F."/>
            <person name="Bowser L."/>
            <person name="Brooks S.Y."/>
            <person name="Carninci P."/>
            <person name="Chao Q."/>
            <person name="Choy N."/>
            <person name="Enju A."/>
            <person name="Goldsmith A.D."/>
            <person name="Gurjal M."/>
            <person name="Hansen N.F."/>
            <person name="Hayashizaki Y."/>
            <person name="Johnson-Hopson C."/>
            <person name="Hsuan V.W."/>
            <person name="Iida K."/>
            <person name="Karnes M."/>
            <person name="Khan S."/>
            <person name="Koesema E."/>
            <person name="Ishida J."/>
            <person name="Jiang P.X."/>
            <person name="Jones T."/>
            <person name="Kawai J."/>
            <person name="Kamiya A."/>
            <person name="Meyers C."/>
            <person name="Nakajima M."/>
            <person name="Narusaka M."/>
            <person name="Seki M."/>
            <person name="Sakurai T."/>
            <person name="Satou M."/>
            <person name="Tamse R."/>
            <person name="Vaysberg M."/>
            <person name="Wallender E.K."/>
            <person name="Wong C."/>
            <person name="Yamamura Y."/>
            <person name="Yuan S."/>
            <person name="Shinozaki K."/>
            <person name="Davis R.W."/>
            <person name="Theologis A."/>
            <person name="Ecker J.R."/>
        </authorList>
    </citation>
    <scope>NUCLEOTIDE SEQUENCE [LARGE SCALE MRNA] (ISOFORMS 1 AND 2)</scope>
    <source>
        <strain>cv. Columbia</strain>
    </source>
</reference>
<reference key="4">
    <citation type="submission" date="2002-03" db="EMBL/GenBank/DDBJ databases">
        <title>Full-length cDNA from Arabidopsis thaliana.</title>
        <authorList>
            <person name="Brover V.V."/>
            <person name="Troukhan M.E."/>
            <person name="Alexandrov N.A."/>
            <person name="Lu Y.-P."/>
            <person name="Flavell R.B."/>
            <person name="Feldmann K.A."/>
        </authorList>
    </citation>
    <scope>NUCLEOTIDE SEQUENCE [LARGE SCALE MRNA] (ISOFORM 1)</scope>
</reference>
<reference key="5">
    <citation type="journal article" date="2014" name="Planta">
        <title>Identification and functional characterization of the distinct plant pectin esterases PAE8 and PAE9 and their deletion mutants.</title>
        <authorList>
            <person name="de Souza A."/>
            <person name="Hull P.A."/>
            <person name="Gille S."/>
            <person name="Pauly M."/>
        </authorList>
    </citation>
    <scope>GENE FAMILY</scope>
    <scope>DISRUPTION PHENOTYPE</scope>
</reference>
<sequence length="391" mass="42009">MTWLKQMWSSILVLAVVVIGARAVPITYLESAVAKGAVCLDGSAPAYHFDKGSGSGVNNWIVHMEGGGWCTDIATCVQRKSTMKGSSKLMNKDFGFSGILGGKQSTNPDFYNWNRIKVRYCDGSSFTGDIEAVDPTHKLFFRGARVWRAVIDDLMAKGMSNAQNAILSGCSAGALAAILHCDQFKSTLPKTAKVKCVSDAGYFIHGKDITGGSYIQSYYAKVVATHGSAKSLPASCTSSMKPDLCFFPQYVAKTLQTPLFVINAAFDSWQIKNVLAPTSVDKSKAWKTCKLDLKKCTAAQLQTVQGYRDQVLAALAPVRSATTNGLFLDSCHAHCQGGSAATWSGDKGPTVANTKMAKAVGDWFFERSTFQNVDCSSLNCNPTCPAVSTED</sequence>
<evidence type="ECO:0000250" key="1">
    <source>
        <dbReference type="UniProtKB" id="B9DFR3"/>
    </source>
</evidence>
<evidence type="ECO:0000250" key="2">
    <source>
        <dbReference type="UniProtKB" id="Q6P988"/>
    </source>
</evidence>
<evidence type="ECO:0000255" key="3"/>
<evidence type="ECO:0000269" key="4">
    <source>
    </source>
</evidence>
<evidence type="ECO:0000303" key="5">
    <source>
    </source>
</evidence>
<evidence type="ECO:0000305" key="6"/>
<evidence type="ECO:0000312" key="7">
    <source>
        <dbReference type="Araport" id="AT5G45280"/>
    </source>
</evidence>
<evidence type="ECO:0000312" key="8">
    <source>
        <dbReference type="EMBL" id="BAB10249.1"/>
    </source>
</evidence>
<feature type="signal peptide" evidence="3">
    <location>
        <begin position="1"/>
        <end position="23"/>
    </location>
</feature>
<feature type="chain" id="PRO_0000431776" description="Pectin acetylesterase 11" evidence="3">
    <location>
        <begin position="24"/>
        <end position="391"/>
    </location>
</feature>
<feature type="active site" description="Charge relay system" evidence="2">
    <location>
        <position position="171"/>
    </location>
</feature>
<feature type="active site" description="Charge relay system" evidence="2">
    <location>
        <position position="267"/>
    </location>
</feature>
<feature type="active site" description="Charge relay system" evidence="2">
    <location>
        <position position="334"/>
    </location>
</feature>
<feature type="splice variant" id="VSP_057380" description="In isoform 2.">
    <original>GYRDQVLAALAPVRSATTNGLFLDSCHAHCQGGSAATWSGDKGPTVANTKMAKAVGDWFFERSTF</original>
    <variation>ETKCWLRWRLFDPRRRTDCSWTRAMLIAKVEALPLGPATKVPQSRIRKWLRRLEIGSLRGVRFRT</variation>
    <location>
        <begin position="306"/>
        <end position="370"/>
    </location>
</feature>
<feature type="splice variant" id="VSP_057381" description="In isoform 2.">
    <location>
        <begin position="371"/>
        <end position="391"/>
    </location>
</feature>
<feature type="sequence conflict" description="In Ref. 4; AAM65412." evidence="6" ref="4">
    <original>W</original>
    <variation>R</variation>
    <location>
        <position position="3"/>
    </location>
</feature>
<feature type="sequence conflict" description="In Ref. 4; AAM65412." evidence="6" ref="4">
    <original>TH</original>
    <variation>AN</variation>
    <location>
        <begin position="136"/>
        <end position="137"/>
    </location>
</feature>
<feature type="sequence conflict" description="In Ref. 4; AAM65412." evidence="6" ref="4">
    <original>D</original>
    <variation>E</variation>
    <location>
        <position position="243"/>
    </location>
</feature>
<feature type="sequence conflict" description="In Ref. 4; AAM65412." evidence="6" ref="4">
    <original>R</original>
    <variation>Q</variation>
    <location>
        <position position="319"/>
    </location>
</feature>
<organism>
    <name type="scientific">Arabidopsis thaliana</name>
    <name type="common">Mouse-ear cress</name>
    <dbReference type="NCBI Taxonomy" id="3702"/>
    <lineage>
        <taxon>Eukaryota</taxon>
        <taxon>Viridiplantae</taxon>
        <taxon>Streptophyta</taxon>
        <taxon>Embryophyta</taxon>
        <taxon>Tracheophyta</taxon>
        <taxon>Spermatophyta</taxon>
        <taxon>Magnoliopsida</taxon>
        <taxon>eudicotyledons</taxon>
        <taxon>Gunneridae</taxon>
        <taxon>Pentapetalae</taxon>
        <taxon>rosids</taxon>
        <taxon>malvids</taxon>
        <taxon>Brassicales</taxon>
        <taxon>Brassicaceae</taxon>
        <taxon>Camelineae</taxon>
        <taxon>Arabidopsis</taxon>
    </lineage>
</organism>
<protein>
    <recommendedName>
        <fullName evidence="5">Pectin acetylesterase 11</fullName>
        <ecNumber evidence="6">3.1.1.-</ecNumber>
    </recommendedName>
</protein>
<keyword id="KW-0025">Alternative splicing</keyword>
<keyword id="KW-0134">Cell wall</keyword>
<keyword id="KW-0961">Cell wall biogenesis/degradation</keyword>
<keyword id="KW-0378">Hydrolase</keyword>
<keyword id="KW-1185">Reference proteome</keyword>
<keyword id="KW-0964">Secreted</keyword>
<keyword id="KW-0732">Signal</keyword>
<proteinExistence type="evidence at transcript level"/>
<accession>Q9FH82</accession>
<accession>Q8LAE9</accession>
<accession>Q93ZX9</accession>